<sequence length="89" mass="10310">MALTSEQKKSILSEFGLHETDTGSPEAQIALLTNRINNLTEHLKFHKHDHHSRRGLLLLVGRRRGLLKYLADNNVDRYRDLIARLGLRR</sequence>
<comment type="function">
    <text evidence="1">One of the primary rRNA binding proteins, it binds directly to 16S rRNA where it helps nucleate assembly of the platform of the 30S subunit by binding and bridging several RNA helices of the 16S rRNA.</text>
</comment>
<comment type="function">
    <text evidence="1">Forms an intersubunit bridge (bridge B4) with the 23S rRNA of the 50S subunit in the ribosome.</text>
</comment>
<comment type="subunit">
    <text evidence="1">Part of the 30S ribosomal subunit. Forms a bridge to the 50S subunit in the 70S ribosome, contacting the 23S rRNA.</text>
</comment>
<comment type="similarity">
    <text evidence="1">Belongs to the universal ribosomal protein uS15 family.</text>
</comment>
<accession>A4QEY3</accession>
<gene>
    <name evidence="1" type="primary">rpsO</name>
    <name type="ordered locus">cgR_1805</name>
</gene>
<protein>
    <recommendedName>
        <fullName evidence="1">Small ribosomal subunit protein uS15</fullName>
    </recommendedName>
    <alternativeName>
        <fullName evidence="2">30S ribosomal protein S15</fullName>
    </alternativeName>
</protein>
<proteinExistence type="inferred from homology"/>
<evidence type="ECO:0000255" key="1">
    <source>
        <dbReference type="HAMAP-Rule" id="MF_01343"/>
    </source>
</evidence>
<evidence type="ECO:0000305" key="2"/>
<feature type="chain" id="PRO_1000054775" description="Small ribosomal subunit protein uS15">
    <location>
        <begin position="1"/>
        <end position="89"/>
    </location>
</feature>
<reference key="1">
    <citation type="journal article" date="2007" name="Microbiology">
        <title>Comparative analysis of the Corynebacterium glutamicum group and complete genome sequence of strain R.</title>
        <authorList>
            <person name="Yukawa H."/>
            <person name="Omumasaba C.A."/>
            <person name="Nonaka H."/>
            <person name="Kos P."/>
            <person name="Okai N."/>
            <person name="Suzuki N."/>
            <person name="Suda M."/>
            <person name="Tsuge Y."/>
            <person name="Watanabe J."/>
            <person name="Ikeda Y."/>
            <person name="Vertes A.A."/>
            <person name="Inui M."/>
        </authorList>
    </citation>
    <scope>NUCLEOTIDE SEQUENCE [LARGE SCALE GENOMIC DNA]</scope>
    <source>
        <strain>R</strain>
    </source>
</reference>
<keyword id="KW-0687">Ribonucleoprotein</keyword>
<keyword id="KW-0689">Ribosomal protein</keyword>
<keyword id="KW-0694">RNA-binding</keyword>
<keyword id="KW-0699">rRNA-binding</keyword>
<name>RS15_CORGB</name>
<organism>
    <name type="scientific">Corynebacterium glutamicum (strain R)</name>
    <dbReference type="NCBI Taxonomy" id="340322"/>
    <lineage>
        <taxon>Bacteria</taxon>
        <taxon>Bacillati</taxon>
        <taxon>Actinomycetota</taxon>
        <taxon>Actinomycetes</taxon>
        <taxon>Mycobacteriales</taxon>
        <taxon>Corynebacteriaceae</taxon>
        <taxon>Corynebacterium</taxon>
    </lineage>
</organism>
<dbReference type="EMBL" id="AP009044">
    <property type="protein sequence ID" value="BAF54799.1"/>
    <property type="molecule type" value="Genomic_DNA"/>
</dbReference>
<dbReference type="RefSeq" id="WP_003857482.1">
    <property type="nucleotide sequence ID" value="NC_009342.1"/>
</dbReference>
<dbReference type="SMR" id="A4QEY3"/>
<dbReference type="GeneID" id="1019933"/>
<dbReference type="KEGG" id="cgt:cgR_1805"/>
<dbReference type="HOGENOM" id="CLU_148518_0_0_11"/>
<dbReference type="PhylomeDB" id="A4QEY3"/>
<dbReference type="Proteomes" id="UP000006698">
    <property type="component" value="Chromosome"/>
</dbReference>
<dbReference type="GO" id="GO:0022627">
    <property type="term" value="C:cytosolic small ribosomal subunit"/>
    <property type="evidence" value="ECO:0007669"/>
    <property type="project" value="TreeGrafter"/>
</dbReference>
<dbReference type="GO" id="GO:0019843">
    <property type="term" value="F:rRNA binding"/>
    <property type="evidence" value="ECO:0007669"/>
    <property type="project" value="UniProtKB-UniRule"/>
</dbReference>
<dbReference type="GO" id="GO:0003735">
    <property type="term" value="F:structural constituent of ribosome"/>
    <property type="evidence" value="ECO:0007669"/>
    <property type="project" value="InterPro"/>
</dbReference>
<dbReference type="GO" id="GO:0006412">
    <property type="term" value="P:translation"/>
    <property type="evidence" value="ECO:0007669"/>
    <property type="project" value="UniProtKB-UniRule"/>
</dbReference>
<dbReference type="CDD" id="cd00353">
    <property type="entry name" value="Ribosomal_S15p_S13e"/>
    <property type="match status" value="1"/>
</dbReference>
<dbReference type="FunFam" id="1.10.287.10:FF:000002">
    <property type="entry name" value="30S ribosomal protein S15"/>
    <property type="match status" value="1"/>
</dbReference>
<dbReference type="Gene3D" id="6.10.250.3130">
    <property type="match status" value="1"/>
</dbReference>
<dbReference type="Gene3D" id="1.10.287.10">
    <property type="entry name" value="S15/NS1, RNA-binding"/>
    <property type="match status" value="1"/>
</dbReference>
<dbReference type="HAMAP" id="MF_01343_B">
    <property type="entry name" value="Ribosomal_uS15_B"/>
    <property type="match status" value="1"/>
</dbReference>
<dbReference type="InterPro" id="IPR000589">
    <property type="entry name" value="Ribosomal_uS15"/>
</dbReference>
<dbReference type="InterPro" id="IPR005290">
    <property type="entry name" value="Ribosomal_uS15_bac-type"/>
</dbReference>
<dbReference type="InterPro" id="IPR009068">
    <property type="entry name" value="uS15_NS1_RNA-bd_sf"/>
</dbReference>
<dbReference type="NCBIfam" id="TIGR00952">
    <property type="entry name" value="S15_bact"/>
    <property type="match status" value="1"/>
</dbReference>
<dbReference type="PANTHER" id="PTHR23321">
    <property type="entry name" value="RIBOSOMAL PROTEIN S15, BACTERIAL AND ORGANELLAR"/>
    <property type="match status" value="1"/>
</dbReference>
<dbReference type="PANTHER" id="PTHR23321:SF26">
    <property type="entry name" value="SMALL RIBOSOMAL SUBUNIT PROTEIN US15M"/>
    <property type="match status" value="1"/>
</dbReference>
<dbReference type="Pfam" id="PF00312">
    <property type="entry name" value="Ribosomal_S15"/>
    <property type="match status" value="1"/>
</dbReference>
<dbReference type="SMART" id="SM01387">
    <property type="entry name" value="Ribosomal_S15"/>
    <property type="match status" value="1"/>
</dbReference>
<dbReference type="SUPFAM" id="SSF47060">
    <property type="entry name" value="S15/NS1 RNA-binding domain"/>
    <property type="match status" value="1"/>
</dbReference>
<dbReference type="PROSITE" id="PS00362">
    <property type="entry name" value="RIBOSOMAL_S15"/>
    <property type="match status" value="1"/>
</dbReference>